<sequence length="1390" mass="157625">MTMPQTDGVEFASRNNLENGDGDQVRSQWVAIERSPTCKRITTALFCKRDEQGKRSQRRVMDVSKLEDLDRRLFIDELIRHVEDDNRVLLQKIRTRTDEVGIDLPKIEVRFSDLFVEAECEVVHGKPIPTLWNAIASKLSRFTFSKQEDKISILKGVSGIIRPKRMTLLLGPPGCGKTTLLLALSGRLDPSLKTRGEVSYNGHLFSEFVPEKTSSYVSQNDLHIPELSVRETLDFSGCFQGAGSRLEMMKEISRREKLKGIVPDPDIDAYMKAASIEGSKTNLQTDYILKILGLTICADTRVGDASRPGISGGQKRRLTTGEMIVGPIKTLFMDEISNGLDSSTTFQILSCLQQFARLSEGTILVSLLQPAPETFELFDDLILMGEGKIIYHGPRDFICSFFEDCGFKCPQRKSVAEFLQEVISRKDQEQYWCHRDKPYCYVSIDSFIEKFKKSDLGLQLQDELSKTYDKSQTQKDGLCIRKYSLSNWDMFKACSRREFLLMKRNSFVYVFKSGLLIFIGSIAMTVYLRTGSTRDSLHANYLLGSLFFSLIKLLADGLPELTLTVSRIAVFCKQKELYFYPAWAYAIPSAILKIPISFLESFLWTMLTYYVIGYSPEAGRFIRQVLILFALHLSCISMFRAIGAVFRDFDVATTIGSISIVLLSVFGGFIVRKPSMPSWLEWGFWLSPLSYAEIGLTSNEFFAPMWRKMTSENRTLGEQVLDARGLNFGNQSYWNAFGALIGFTLFFNTVFALALTFLKTSQRSRVIVSHDKNTQSSEKDSKIASHSKNALPFEPLTFTFQDVQYFIETPQGKKLQLLSDVTGAFKPGVLTALMGVSGAGKTTLLDVLSGRKTRGDIKGQIEVGGYVKVQDTFSRVSGYCEQFDIHSPNLTVQESLKYSAWLRLPCNISSETKSAIVNEVLETIELEEIKDSLVGVPGISGVTAEQRKRLTIAVELVSNPSIIFMDEPTTGLDARAAAIVMRAVKNIAETGRTVVCTIHQPSIDIFEAFDELILMKNGGKIIYYGPLGQHSSKVIEYFMSIPGVPKLKENSNPATWILDITSKSSEDKLGVDLAHIYEESTLFKENKMVIEQTRCTSLGSERLILSSRYAQTSWEQFKACLWKQHLSYWRNPSYNLTRIIFMCFTCMLCGILFLQKAKEINNQQDLFNVFGSMFTVVLFSGINNCSTVIFCVATERNVFYRERFSRMYNPWAYSLAQVLVEIPYSLFQSIIYVIIVYPMVGYHWSVYKVFWSFYSIFCSLLIFNYFGMLLVVVTPNVHIAFTLRSSFYAIVNLFAGYVMPKPNIPRWWIWMYYLSPTSWVLNGLLTSQYGDMEKEILAFGEKKKVSAFLEDYFGYRYDSLALVAVVLIAFPILLASLFAFFIGKLNFQKK</sequence>
<organism>
    <name type="scientific">Arabidopsis thaliana</name>
    <name type="common">Mouse-ear cress</name>
    <dbReference type="NCBI Taxonomy" id="3702"/>
    <lineage>
        <taxon>Eukaryota</taxon>
        <taxon>Viridiplantae</taxon>
        <taxon>Streptophyta</taxon>
        <taxon>Embryophyta</taxon>
        <taxon>Tracheophyta</taxon>
        <taxon>Spermatophyta</taxon>
        <taxon>Magnoliopsida</taxon>
        <taxon>eudicotyledons</taxon>
        <taxon>Gunneridae</taxon>
        <taxon>Pentapetalae</taxon>
        <taxon>rosids</taxon>
        <taxon>malvids</taxon>
        <taxon>Brassicales</taxon>
        <taxon>Brassicaceae</taxon>
        <taxon>Camelineae</taxon>
        <taxon>Arabidopsis</taxon>
    </lineage>
</organism>
<evidence type="ECO:0000250" key="1"/>
<evidence type="ECO:0000255" key="2"/>
<evidence type="ECO:0000255" key="3">
    <source>
        <dbReference type="PROSITE-ProRule" id="PRU00434"/>
    </source>
</evidence>
<evidence type="ECO:0000256" key="4">
    <source>
        <dbReference type="SAM" id="MobiDB-lite"/>
    </source>
</evidence>
<evidence type="ECO:0000305" key="5"/>
<feature type="chain" id="PRO_0000234642" description="ABC transporter G family member 43">
    <location>
        <begin position="1"/>
        <end position="1390"/>
    </location>
</feature>
<feature type="transmembrane region" description="Helical" evidence="2">
    <location>
        <begin position="507"/>
        <end position="527"/>
    </location>
</feature>
<feature type="transmembrane region" description="Helical" evidence="2">
    <location>
        <begin position="541"/>
        <end position="561"/>
    </location>
</feature>
<feature type="transmembrane region" description="Helical" evidence="2">
    <location>
        <begin position="594"/>
        <end position="614"/>
    </location>
</feature>
<feature type="transmembrane region" description="Helical" evidence="2">
    <location>
        <begin position="626"/>
        <end position="646"/>
    </location>
</feature>
<feature type="transmembrane region" description="Helical" evidence="2">
    <location>
        <begin position="651"/>
        <end position="671"/>
    </location>
</feature>
<feature type="transmembrane region" description="Helical" evidence="2">
    <location>
        <begin position="737"/>
        <end position="757"/>
    </location>
</feature>
<feature type="transmembrane region" description="Helical" evidence="2">
    <location>
        <begin position="1134"/>
        <end position="1154"/>
    </location>
</feature>
<feature type="transmembrane region" description="Helical" evidence="2">
    <location>
        <begin position="1173"/>
        <end position="1193"/>
    </location>
</feature>
<feature type="transmembrane region" description="Helical" evidence="2">
    <location>
        <begin position="1218"/>
        <end position="1238"/>
    </location>
</feature>
<feature type="transmembrane region" description="Helical" evidence="2">
    <location>
        <begin position="1253"/>
        <end position="1273"/>
    </location>
</feature>
<feature type="transmembrane region" description="Helical" evidence="2">
    <location>
        <begin position="1279"/>
        <end position="1299"/>
    </location>
</feature>
<feature type="transmembrane region" description="Helical" evidence="2">
    <location>
        <begin position="1307"/>
        <end position="1327"/>
    </location>
</feature>
<feature type="transmembrane region" description="Helical" evidence="2">
    <location>
        <begin position="1362"/>
        <end position="1382"/>
    </location>
</feature>
<feature type="domain" description="ABC transporter 1" evidence="3">
    <location>
        <begin position="137"/>
        <end position="411"/>
    </location>
</feature>
<feature type="domain" description="ABC transmembrane type-2 1">
    <location>
        <begin position="489"/>
        <end position="701"/>
    </location>
</feature>
<feature type="domain" description="ABC transporter 2" evidence="3">
    <location>
        <begin position="798"/>
        <end position="1043"/>
    </location>
</feature>
<feature type="domain" description="ABC transmembrane type-2 2">
    <location>
        <begin position="1115"/>
        <end position="1329"/>
    </location>
</feature>
<feature type="region of interest" description="Disordered" evidence="4">
    <location>
        <begin position="1"/>
        <end position="22"/>
    </location>
</feature>
<feature type="binding site" evidence="3">
    <location>
        <begin position="171"/>
        <end position="178"/>
    </location>
    <ligand>
        <name>ATP</name>
        <dbReference type="ChEBI" id="CHEBI:30616"/>
        <label>1</label>
    </ligand>
</feature>
<feature type="binding site" evidence="3">
    <location>
        <begin position="835"/>
        <end position="842"/>
    </location>
    <ligand>
        <name>ATP</name>
        <dbReference type="ChEBI" id="CHEBI:30616"/>
        <label>2</label>
    </ligand>
</feature>
<feature type="sequence conflict" description="In Ref. 3; DAA00883." ref="3">
    <original>L</original>
    <variation>M</variation>
    <location>
        <position position="543"/>
    </location>
</feature>
<keyword id="KW-0067">ATP-binding</keyword>
<keyword id="KW-0472">Membrane</keyword>
<keyword id="KW-0547">Nucleotide-binding</keyword>
<keyword id="KW-1185">Reference proteome</keyword>
<keyword id="KW-0677">Repeat</keyword>
<keyword id="KW-0812">Transmembrane</keyword>
<keyword id="KW-1133">Transmembrane helix</keyword>
<keyword id="KW-0813">Transport</keyword>
<comment type="function">
    <text evidence="1">May be a general defense protein.</text>
</comment>
<comment type="subcellular location">
    <subcellularLocation>
        <location evidence="1">Membrane</location>
        <topology evidence="1">Multi-pass membrane protein</topology>
    </subcellularLocation>
</comment>
<comment type="similarity">
    <text evidence="5">Belongs to the ABC transporter superfamily. ABCG family. PDR (TC 3.A.1.205) subfamily.</text>
</comment>
<gene>
    <name type="primary">ABCG43</name>
    <name type="synonym">PDR15</name>
    <name type="ordered locus">At4g15236</name>
    <name type="ORF">FCAALL.461</name>
</gene>
<reference key="1">
    <citation type="journal article" date="1999" name="Nature">
        <title>Sequence and analysis of chromosome 4 of the plant Arabidopsis thaliana.</title>
        <authorList>
            <person name="Mayer K.F.X."/>
            <person name="Schueller C."/>
            <person name="Wambutt R."/>
            <person name="Murphy G."/>
            <person name="Volckaert G."/>
            <person name="Pohl T."/>
            <person name="Duesterhoeft A."/>
            <person name="Stiekema W."/>
            <person name="Entian K.-D."/>
            <person name="Terryn N."/>
            <person name="Harris B."/>
            <person name="Ansorge W."/>
            <person name="Brandt P."/>
            <person name="Grivell L.A."/>
            <person name="Rieger M."/>
            <person name="Weichselgartner M."/>
            <person name="de Simone V."/>
            <person name="Obermaier B."/>
            <person name="Mache R."/>
            <person name="Mueller M."/>
            <person name="Kreis M."/>
            <person name="Delseny M."/>
            <person name="Puigdomenech P."/>
            <person name="Watson M."/>
            <person name="Schmidtheini T."/>
            <person name="Reichert B."/>
            <person name="Portetelle D."/>
            <person name="Perez-Alonso M."/>
            <person name="Boutry M."/>
            <person name="Bancroft I."/>
            <person name="Vos P."/>
            <person name="Hoheisel J."/>
            <person name="Zimmermann W."/>
            <person name="Wedler H."/>
            <person name="Ridley P."/>
            <person name="Langham S.-A."/>
            <person name="McCullagh B."/>
            <person name="Bilham L."/>
            <person name="Robben J."/>
            <person name="van der Schueren J."/>
            <person name="Grymonprez B."/>
            <person name="Chuang Y.-J."/>
            <person name="Vandenbussche F."/>
            <person name="Braeken M."/>
            <person name="Weltjens I."/>
            <person name="Voet M."/>
            <person name="Bastiaens I."/>
            <person name="Aert R."/>
            <person name="Defoor E."/>
            <person name="Weitzenegger T."/>
            <person name="Bothe G."/>
            <person name="Ramsperger U."/>
            <person name="Hilbert H."/>
            <person name="Braun M."/>
            <person name="Holzer E."/>
            <person name="Brandt A."/>
            <person name="Peters S."/>
            <person name="van Staveren M."/>
            <person name="Dirkse W."/>
            <person name="Mooijman P."/>
            <person name="Klein Lankhorst R."/>
            <person name="Rose M."/>
            <person name="Hauf J."/>
            <person name="Koetter P."/>
            <person name="Berneiser S."/>
            <person name="Hempel S."/>
            <person name="Feldpausch M."/>
            <person name="Lamberth S."/>
            <person name="Van den Daele H."/>
            <person name="De Keyser A."/>
            <person name="Buysshaert C."/>
            <person name="Gielen J."/>
            <person name="Villarroel R."/>
            <person name="De Clercq R."/>
            <person name="van Montagu M."/>
            <person name="Rogers J."/>
            <person name="Cronin A."/>
            <person name="Quail M.A."/>
            <person name="Bray-Allen S."/>
            <person name="Clark L."/>
            <person name="Doggett J."/>
            <person name="Hall S."/>
            <person name="Kay M."/>
            <person name="Lennard N."/>
            <person name="McLay K."/>
            <person name="Mayes R."/>
            <person name="Pettett A."/>
            <person name="Rajandream M.A."/>
            <person name="Lyne M."/>
            <person name="Benes V."/>
            <person name="Rechmann S."/>
            <person name="Borkova D."/>
            <person name="Bloecker H."/>
            <person name="Scharfe M."/>
            <person name="Grimm M."/>
            <person name="Loehnert T.-H."/>
            <person name="Dose S."/>
            <person name="de Haan M."/>
            <person name="Maarse A.C."/>
            <person name="Schaefer M."/>
            <person name="Mueller-Auer S."/>
            <person name="Gabel C."/>
            <person name="Fuchs M."/>
            <person name="Fartmann B."/>
            <person name="Granderath K."/>
            <person name="Dauner D."/>
            <person name="Herzl A."/>
            <person name="Neumann S."/>
            <person name="Argiriou A."/>
            <person name="Vitale D."/>
            <person name="Liguori R."/>
            <person name="Piravandi E."/>
            <person name="Massenet O."/>
            <person name="Quigley F."/>
            <person name="Clabauld G."/>
            <person name="Muendlein A."/>
            <person name="Felber R."/>
            <person name="Schnabl S."/>
            <person name="Hiller R."/>
            <person name="Schmidt W."/>
            <person name="Lecharny A."/>
            <person name="Aubourg S."/>
            <person name="Chefdor F."/>
            <person name="Cooke R."/>
            <person name="Berger C."/>
            <person name="Monfort A."/>
            <person name="Casacuberta E."/>
            <person name="Gibbons T."/>
            <person name="Weber N."/>
            <person name="Vandenbol M."/>
            <person name="Bargues M."/>
            <person name="Terol J."/>
            <person name="Torres A."/>
            <person name="Perez-Perez A."/>
            <person name="Purnelle B."/>
            <person name="Bent E."/>
            <person name="Johnson S."/>
            <person name="Tacon D."/>
            <person name="Jesse T."/>
            <person name="Heijnen L."/>
            <person name="Schwarz S."/>
            <person name="Scholler P."/>
            <person name="Heber S."/>
            <person name="Francs P."/>
            <person name="Bielke C."/>
            <person name="Frishman D."/>
            <person name="Haase D."/>
            <person name="Lemcke K."/>
            <person name="Mewes H.-W."/>
            <person name="Stocker S."/>
            <person name="Zaccaria P."/>
            <person name="Bevan M."/>
            <person name="Wilson R.K."/>
            <person name="de la Bastide M."/>
            <person name="Habermann K."/>
            <person name="Parnell L."/>
            <person name="Dedhia N."/>
            <person name="Gnoj L."/>
            <person name="Schutz K."/>
            <person name="Huang E."/>
            <person name="Spiegel L."/>
            <person name="Sekhon M."/>
            <person name="Murray J."/>
            <person name="Sheet P."/>
            <person name="Cordes M."/>
            <person name="Abu-Threideh J."/>
            <person name="Stoneking T."/>
            <person name="Kalicki J."/>
            <person name="Graves T."/>
            <person name="Harmon G."/>
            <person name="Edwards J."/>
            <person name="Latreille P."/>
            <person name="Courtney L."/>
            <person name="Cloud J."/>
            <person name="Abbott A."/>
            <person name="Scott K."/>
            <person name="Johnson D."/>
            <person name="Minx P."/>
            <person name="Bentley D."/>
            <person name="Fulton B."/>
            <person name="Miller N."/>
            <person name="Greco T."/>
            <person name="Kemp K."/>
            <person name="Kramer J."/>
            <person name="Fulton L."/>
            <person name="Mardis E."/>
            <person name="Dante M."/>
            <person name="Pepin K."/>
            <person name="Hillier L.W."/>
            <person name="Nelson J."/>
            <person name="Spieth J."/>
            <person name="Ryan E."/>
            <person name="Andrews S."/>
            <person name="Geisel C."/>
            <person name="Layman D."/>
            <person name="Du H."/>
            <person name="Ali J."/>
            <person name="Berghoff A."/>
            <person name="Jones K."/>
            <person name="Drone K."/>
            <person name="Cotton M."/>
            <person name="Joshu C."/>
            <person name="Antonoiu B."/>
            <person name="Zidanic M."/>
            <person name="Strong C."/>
            <person name="Sun H."/>
            <person name="Lamar B."/>
            <person name="Yordan C."/>
            <person name="Ma P."/>
            <person name="Zhong J."/>
            <person name="Preston R."/>
            <person name="Vil D."/>
            <person name="Shekher M."/>
            <person name="Matero A."/>
            <person name="Shah R."/>
            <person name="Swaby I.K."/>
            <person name="O'Shaughnessy A."/>
            <person name="Rodriguez M."/>
            <person name="Hoffman J."/>
            <person name="Till S."/>
            <person name="Granat S."/>
            <person name="Shohdy N."/>
            <person name="Hasegawa A."/>
            <person name="Hameed A."/>
            <person name="Lodhi M."/>
            <person name="Johnson A."/>
            <person name="Chen E."/>
            <person name="Marra M.A."/>
            <person name="Martienssen R."/>
            <person name="McCombie W.R."/>
        </authorList>
    </citation>
    <scope>NUCLEOTIDE SEQUENCE [LARGE SCALE GENOMIC DNA]</scope>
    <source>
        <strain>cv. Columbia</strain>
    </source>
</reference>
<reference key="2">
    <citation type="journal article" date="2017" name="Plant J.">
        <title>Araport11: a complete reannotation of the Arabidopsis thaliana reference genome.</title>
        <authorList>
            <person name="Cheng C.Y."/>
            <person name="Krishnakumar V."/>
            <person name="Chan A.P."/>
            <person name="Thibaud-Nissen F."/>
            <person name="Schobel S."/>
            <person name="Town C.D."/>
        </authorList>
    </citation>
    <scope>GENOME REANNOTATION</scope>
    <scope>SEQUENCE REVISION</scope>
    <source>
        <strain>cv. Columbia</strain>
    </source>
</reference>
<reference key="3">
    <citation type="journal article" date="2002" name="Planta">
        <title>The plant PDR family of ABC transporters.</title>
        <authorList>
            <person name="van den Brule S."/>
            <person name="Smart C.C."/>
        </authorList>
    </citation>
    <scope>NUCLEOTIDE SEQUENCE [MRNA]</scope>
    <scope>IDENTIFICATION</scope>
</reference>
<reference key="4">
    <citation type="journal article" date="2006" name="FEBS Lett.">
        <title>Organization and function of the plant pleiotropic drug resistance ABC transporter family.</title>
        <authorList>
            <person name="Crouzet J."/>
            <person name="Trombik T."/>
            <person name="Fraysse A.S."/>
            <person name="Boutry M."/>
        </authorList>
    </citation>
    <scope>GENE FAMILY</scope>
    <scope>NOMENCLATURE</scope>
</reference>
<reference key="5">
    <citation type="journal article" date="2008" name="Trends Plant Sci.">
        <title>Plant ABC proteins - a unified nomenclature and updated inventory.</title>
        <authorList>
            <person name="Verrier P.J."/>
            <person name="Bird D."/>
            <person name="Burla B."/>
            <person name="Dassa E."/>
            <person name="Forestier C."/>
            <person name="Geisler M."/>
            <person name="Klein M."/>
            <person name="Kolukisaoglu H.U."/>
            <person name="Lee Y."/>
            <person name="Martinoia E."/>
            <person name="Murphy A."/>
            <person name="Rea P.A."/>
            <person name="Samuels L."/>
            <person name="Schulz B."/>
            <person name="Spalding E.J."/>
            <person name="Yazaki K."/>
            <person name="Theodoulou F.L."/>
        </authorList>
    </citation>
    <scope>GENE FAMILY</scope>
    <scope>NOMENCLATURE</scope>
</reference>
<proteinExistence type="evidence at transcript level"/>
<dbReference type="EMBL" id="AL161541">
    <property type="status" value="NOT_ANNOTATED_CDS"/>
    <property type="molecule type" value="Genomic_DNA"/>
</dbReference>
<dbReference type="EMBL" id="CP002687">
    <property type="protein sequence ID" value="AEE83574.2"/>
    <property type="molecule type" value="Genomic_DNA"/>
</dbReference>
<dbReference type="EMBL" id="BK001014">
    <property type="protein sequence ID" value="DAA00883.1"/>
    <property type="molecule type" value="Genomic_DNA"/>
</dbReference>
<dbReference type="RefSeq" id="NP_680694.3">
    <property type="nucleotide sequence ID" value="NM_148328.3"/>
</dbReference>
<dbReference type="SMR" id="Q7PC81"/>
<dbReference type="FunCoup" id="Q7PC81">
    <property type="interactions" value="174"/>
</dbReference>
<dbReference type="STRING" id="3702.Q7PC81"/>
<dbReference type="iPTMnet" id="Q7PC81"/>
<dbReference type="PaxDb" id="3702-AT4G15236.1"/>
<dbReference type="EnsemblPlants" id="AT4G15236.1">
    <property type="protein sequence ID" value="AT4G15236.1"/>
    <property type="gene ID" value="AT4G15236"/>
</dbReference>
<dbReference type="GeneID" id="827189"/>
<dbReference type="Gramene" id="AT4G15236.1">
    <property type="protein sequence ID" value="AT4G15236.1"/>
    <property type="gene ID" value="AT4G15236"/>
</dbReference>
<dbReference type="KEGG" id="ath:AT4G15236"/>
<dbReference type="Araport" id="AT4G15236"/>
<dbReference type="TAIR" id="AT4G15236">
    <property type="gene designation" value="ABCG43"/>
</dbReference>
<dbReference type="eggNOG" id="KOG0065">
    <property type="taxonomic scope" value="Eukaryota"/>
</dbReference>
<dbReference type="HOGENOM" id="CLU_000604_35_6_1"/>
<dbReference type="InParanoid" id="Q7PC81"/>
<dbReference type="OMA" id="FICSFFE"/>
<dbReference type="OrthoDB" id="6489438at2759"/>
<dbReference type="PhylomeDB" id="Q7PC81"/>
<dbReference type="PRO" id="PR:Q7PC81"/>
<dbReference type="Proteomes" id="UP000006548">
    <property type="component" value="Chromosome 4"/>
</dbReference>
<dbReference type="ExpressionAtlas" id="Q7PC81">
    <property type="expression patterns" value="baseline and differential"/>
</dbReference>
<dbReference type="GO" id="GO:0005886">
    <property type="term" value="C:plasma membrane"/>
    <property type="evidence" value="ECO:0007669"/>
    <property type="project" value="UniProtKB-ARBA"/>
</dbReference>
<dbReference type="GO" id="GO:0140359">
    <property type="term" value="F:ABC-type transporter activity"/>
    <property type="evidence" value="ECO:0007669"/>
    <property type="project" value="InterPro"/>
</dbReference>
<dbReference type="GO" id="GO:0005524">
    <property type="term" value="F:ATP binding"/>
    <property type="evidence" value="ECO:0007669"/>
    <property type="project" value="UniProtKB-KW"/>
</dbReference>
<dbReference type="GO" id="GO:0016887">
    <property type="term" value="F:ATP hydrolysis activity"/>
    <property type="evidence" value="ECO:0007669"/>
    <property type="project" value="InterPro"/>
</dbReference>
<dbReference type="CDD" id="cd03232">
    <property type="entry name" value="ABCG_PDR_domain2"/>
    <property type="match status" value="1"/>
</dbReference>
<dbReference type="FunFam" id="3.40.50.300:FF:000157">
    <property type="entry name" value="ABC transporter G family member 34"/>
    <property type="match status" value="1"/>
</dbReference>
<dbReference type="FunFam" id="3.40.50.300:FF:000532">
    <property type="entry name" value="ABC transporter G family member 34"/>
    <property type="match status" value="1"/>
</dbReference>
<dbReference type="Gene3D" id="3.40.50.300">
    <property type="entry name" value="P-loop containing nucleotide triphosphate hydrolases"/>
    <property type="match status" value="2"/>
</dbReference>
<dbReference type="InterPro" id="IPR003593">
    <property type="entry name" value="AAA+_ATPase"/>
</dbReference>
<dbReference type="InterPro" id="IPR013525">
    <property type="entry name" value="ABC2_TM"/>
</dbReference>
<dbReference type="InterPro" id="IPR003439">
    <property type="entry name" value="ABC_transporter-like_ATP-bd"/>
</dbReference>
<dbReference type="InterPro" id="IPR043926">
    <property type="entry name" value="ABCG_dom"/>
</dbReference>
<dbReference type="InterPro" id="IPR034003">
    <property type="entry name" value="ABCG_PDR_2"/>
</dbReference>
<dbReference type="InterPro" id="IPR027417">
    <property type="entry name" value="P-loop_NTPase"/>
</dbReference>
<dbReference type="InterPro" id="IPR013581">
    <property type="entry name" value="PDR_assoc"/>
</dbReference>
<dbReference type="PANTHER" id="PTHR19241">
    <property type="entry name" value="ATP-BINDING CASSETTE TRANSPORTER"/>
    <property type="match status" value="1"/>
</dbReference>
<dbReference type="Pfam" id="PF01061">
    <property type="entry name" value="ABC2_membrane"/>
    <property type="match status" value="2"/>
</dbReference>
<dbReference type="Pfam" id="PF19055">
    <property type="entry name" value="ABC2_membrane_7"/>
    <property type="match status" value="1"/>
</dbReference>
<dbReference type="Pfam" id="PF00005">
    <property type="entry name" value="ABC_tran"/>
    <property type="match status" value="2"/>
</dbReference>
<dbReference type="Pfam" id="PF08370">
    <property type="entry name" value="PDR_assoc"/>
    <property type="match status" value="1"/>
</dbReference>
<dbReference type="SMART" id="SM00382">
    <property type="entry name" value="AAA"/>
    <property type="match status" value="2"/>
</dbReference>
<dbReference type="SUPFAM" id="SSF52540">
    <property type="entry name" value="P-loop containing nucleoside triphosphate hydrolases"/>
    <property type="match status" value="2"/>
</dbReference>
<dbReference type="PROSITE" id="PS50893">
    <property type="entry name" value="ABC_TRANSPORTER_2"/>
    <property type="match status" value="2"/>
</dbReference>
<name>AB43G_ARATH</name>
<protein>
    <recommendedName>
        <fullName>ABC transporter G family member 43</fullName>
        <shortName>ABC transporter ABCG.43</shortName>
        <shortName>AtABCG43</shortName>
    </recommendedName>
    <alternativeName>
        <fullName>Pleiotropic drug resistance protein 15</fullName>
    </alternativeName>
</protein>
<accession>Q7PC81</accession>
<accession>F4JJF5</accession>